<gene>
    <name type="primary">asn1</name>
    <name type="ORF">SPBC119.10</name>
</gene>
<organism>
    <name type="scientific">Schizosaccharomyces pombe (strain 972 / ATCC 24843)</name>
    <name type="common">Fission yeast</name>
    <dbReference type="NCBI Taxonomy" id="284812"/>
    <lineage>
        <taxon>Eukaryota</taxon>
        <taxon>Fungi</taxon>
        <taxon>Dikarya</taxon>
        <taxon>Ascomycota</taxon>
        <taxon>Taphrinomycotina</taxon>
        <taxon>Schizosaccharomycetes</taxon>
        <taxon>Schizosaccharomycetales</taxon>
        <taxon>Schizosaccharomycetaceae</taxon>
        <taxon>Schizosaccharomyces</taxon>
    </lineage>
</organism>
<feature type="initiator methionine" description="Removed" evidence="1">
    <location>
        <position position="1"/>
    </location>
</feature>
<feature type="chain" id="PRO_0000056916" description="Probable asparagine synthetase [glutamine-hydrolyzing]">
    <location>
        <begin position="2"/>
        <end position="557"/>
    </location>
</feature>
<feature type="domain" description="Glutamine amidotransferase type-2" evidence="2">
    <location>
        <begin position="2"/>
        <end position="188"/>
    </location>
</feature>
<feature type="domain" description="Asparagine synthetase">
    <location>
        <begin position="196"/>
        <end position="531"/>
    </location>
</feature>
<feature type="active site" description="For GATase activity" evidence="1">
    <location>
        <position position="2"/>
    </location>
</feature>
<feature type="binding site" evidence="1">
    <location>
        <begin position="50"/>
        <end position="54"/>
    </location>
    <ligand>
        <name>L-glutamine</name>
        <dbReference type="ChEBI" id="CHEBI:58359"/>
    </ligand>
</feature>
<feature type="binding site" evidence="1">
    <location>
        <begin position="75"/>
        <end position="77"/>
    </location>
    <ligand>
        <name>L-glutamine</name>
        <dbReference type="ChEBI" id="CHEBI:58359"/>
    </ligand>
</feature>
<feature type="binding site" evidence="1">
    <location>
        <position position="99"/>
    </location>
    <ligand>
        <name>L-glutamine</name>
        <dbReference type="ChEBI" id="CHEBI:58359"/>
    </ligand>
</feature>
<feature type="binding site" evidence="1">
    <location>
        <position position="235"/>
    </location>
    <ligand>
        <name>ATP</name>
        <dbReference type="ChEBI" id="CHEBI:30616"/>
    </ligand>
</feature>
<feature type="binding site" evidence="1">
    <location>
        <position position="280"/>
    </location>
    <ligand>
        <name>ATP</name>
        <dbReference type="ChEBI" id="CHEBI:30616"/>
    </ligand>
</feature>
<feature type="binding site" evidence="1">
    <location>
        <begin position="354"/>
        <end position="355"/>
    </location>
    <ligand>
        <name>ATP</name>
        <dbReference type="ChEBI" id="CHEBI:30616"/>
    </ligand>
</feature>
<feature type="site" description="Important for beta-aspartyl-AMP intermediate formation" evidence="1">
    <location>
        <position position="356"/>
    </location>
</feature>
<feature type="modified residue" description="Phosphoserine" evidence="5">
    <location>
        <position position="391"/>
    </location>
</feature>
<feature type="modified residue" description="Phosphoserine" evidence="5">
    <location>
        <position position="489"/>
    </location>
</feature>
<dbReference type="EC" id="6.3.5.4"/>
<dbReference type="EMBL" id="D89101">
    <property type="protein sequence ID" value="BAA13764.1"/>
    <property type="status" value="ALT_FRAME"/>
    <property type="molecule type" value="mRNA"/>
</dbReference>
<dbReference type="EMBL" id="CU329671">
    <property type="protein sequence ID" value="CAA17925.1"/>
    <property type="molecule type" value="Genomic_DNA"/>
</dbReference>
<dbReference type="PIR" id="T39308">
    <property type="entry name" value="T39308"/>
</dbReference>
<dbReference type="RefSeq" id="NP_595291.1">
    <property type="nucleotide sequence ID" value="NM_001021198.2"/>
</dbReference>
<dbReference type="SMR" id="P78753"/>
<dbReference type="BioGRID" id="276257">
    <property type="interactions" value="4"/>
</dbReference>
<dbReference type="FunCoup" id="P78753">
    <property type="interactions" value="587"/>
</dbReference>
<dbReference type="STRING" id="284812.P78753"/>
<dbReference type="iPTMnet" id="P78753"/>
<dbReference type="PaxDb" id="4896-SPBC119.10.1"/>
<dbReference type="EnsemblFungi" id="SPBC119.10.1">
    <property type="protein sequence ID" value="SPBC119.10.1:pep"/>
    <property type="gene ID" value="SPBC119.10"/>
</dbReference>
<dbReference type="PomBase" id="SPBC119.10">
    <property type="gene designation" value="asn1"/>
</dbReference>
<dbReference type="VEuPathDB" id="FungiDB:SPBC119.10"/>
<dbReference type="eggNOG" id="KOG0571">
    <property type="taxonomic scope" value="Eukaryota"/>
</dbReference>
<dbReference type="HOGENOM" id="CLU_014658_2_2_1"/>
<dbReference type="InParanoid" id="P78753"/>
<dbReference type="OMA" id="GIVCAFD"/>
<dbReference type="PhylomeDB" id="P78753"/>
<dbReference type="Reactome" id="R-SPO-8963693">
    <property type="pathway name" value="Aspartate and asparagine metabolism"/>
</dbReference>
<dbReference type="UniPathway" id="UPA00134">
    <property type="reaction ID" value="UER00195"/>
</dbReference>
<dbReference type="PRO" id="PR:P78753"/>
<dbReference type="Proteomes" id="UP000002485">
    <property type="component" value="Chromosome II"/>
</dbReference>
<dbReference type="GO" id="GO:0005829">
    <property type="term" value="C:cytosol"/>
    <property type="evidence" value="ECO:0007005"/>
    <property type="project" value="PomBase"/>
</dbReference>
<dbReference type="GO" id="GO:0005634">
    <property type="term" value="C:nucleus"/>
    <property type="evidence" value="ECO:0007005"/>
    <property type="project" value="PomBase"/>
</dbReference>
<dbReference type="GO" id="GO:0004066">
    <property type="term" value="F:asparagine synthase (glutamine-hydrolyzing) activity"/>
    <property type="evidence" value="ECO:0000318"/>
    <property type="project" value="GO_Central"/>
</dbReference>
<dbReference type="GO" id="GO:0005524">
    <property type="term" value="F:ATP binding"/>
    <property type="evidence" value="ECO:0007669"/>
    <property type="project" value="UniProtKB-KW"/>
</dbReference>
<dbReference type="GO" id="GO:0006529">
    <property type="term" value="P:asparagine biosynthetic process"/>
    <property type="evidence" value="ECO:0000315"/>
    <property type="project" value="PomBase"/>
</dbReference>
<dbReference type="GO" id="GO:0070981">
    <property type="term" value="P:L-asparagine biosynthetic process"/>
    <property type="evidence" value="ECO:0007669"/>
    <property type="project" value="UniProtKB-UniPathway"/>
</dbReference>
<dbReference type="CDD" id="cd01991">
    <property type="entry name" value="Asn_synthase_B_C"/>
    <property type="match status" value="1"/>
</dbReference>
<dbReference type="CDD" id="cd00712">
    <property type="entry name" value="AsnB"/>
    <property type="match status" value="1"/>
</dbReference>
<dbReference type="FunFam" id="3.40.50.620:FF:000031">
    <property type="entry name" value="Asparagine synthase B"/>
    <property type="match status" value="1"/>
</dbReference>
<dbReference type="FunFam" id="3.60.20.10:FF:000050">
    <property type="entry name" value="Asparagine synthetase 2"/>
    <property type="match status" value="1"/>
</dbReference>
<dbReference type="Gene3D" id="3.60.20.10">
    <property type="entry name" value="Glutamine Phosphoribosylpyrophosphate, subunit 1, domain 1"/>
    <property type="match status" value="1"/>
</dbReference>
<dbReference type="Gene3D" id="3.40.50.620">
    <property type="entry name" value="HUPs"/>
    <property type="match status" value="1"/>
</dbReference>
<dbReference type="InterPro" id="IPR006426">
    <property type="entry name" value="Asn_synth_AEB"/>
</dbReference>
<dbReference type="InterPro" id="IPR001962">
    <property type="entry name" value="Asn_synthase"/>
</dbReference>
<dbReference type="InterPro" id="IPR050795">
    <property type="entry name" value="Asn_Synthetase"/>
</dbReference>
<dbReference type="InterPro" id="IPR033738">
    <property type="entry name" value="AsnB_N"/>
</dbReference>
<dbReference type="InterPro" id="IPR017932">
    <property type="entry name" value="GATase_2_dom"/>
</dbReference>
<dbReference type="InterPro" id="IPR029055">
    <property type="entry name" value="Ntn_hydrolases_N"/>
</dbReference>
<dbReference type="InterPro" id="IPR014729">
    <property type="entry name" value="Rossmann-like_a/b/a_fold"/>
</dbReference>
<dbReference type="NCBIfam" id="TIGR01536">
    <property type="entry name" value="asn_synth_AEB"/>
    <property type="match status" value="1"/>
</dbReference>
<dbReference type="NCBIfam" id="NF006949">
    <property type="entry name" value="PRK09431.1"/>
    <property type="match status" value="1"/>
</dbReference>
<dbReference type="PANTHER" id="PTHR11772">
    <property type="entry name" value="ASPARAGINE SYNTHETASE"/>
    <property type="match status" value="1"/>
</dbReference>
<dbReference type="PANTHER" id="PTHR11772:SF2">
    <property type="entry name" value="ASPARAGINE SYNTHETASE [GLUTAMINE-HYDROLYZING]"/>
    <property type="match status" value="1"/>
</dbReference>
<dbReference type="Pfam" id="PF00733">
    <property type="entry name" value="Asn_synthase"/>
    <property type="match status" value="1"/>
</dbReference>
<dbReference type="Pfam" id="PF13537">
    <property type="entry name" value="GATase_7"/>
    <property type="match status" value="1"/>
</dbReference>
<dbReference type="PIRSF" id="PIRSF001589">
    <property type="entry name" value="Asn_synthetase_glu-h"/>
    <property type="match status" value="1"/>
</dbReference>
<dbReference type="SUPFAM" id="SSF52402">
    <property type="entry name" value="Adenine nucleotide alpha hydrolases-like"/>
    <property type="match status" value="1"/>
</dbReference>
<dbReference type="SUPFAM" id="SSF56235">
    <property type="entry name" value="N-terminal nucleophile aminohydrolases (Ntn hydrolases)"/>
    <property type="match status" value="1"/>
</dbReference>
<dbReference type="PROSITE" id="PS51278">
    <property type="entry name" value="GATASE_TYPE_2"/>
    <property type="match status" value="1"/>
</dbReference>
<proteinExistence type="evidence at protein level"/>
<keyword id="KW-0028">Amino-acid biosynthesis</keyword>
<keyword id="KW-0061">Asparagine biosynthesis</keyword>
<keyword id="KW-0067">ATP-binding</keyword>
<keyword id="KW-0963">Cytoplasm</keyword>
<keyword id="KW-0315">Glutamine amidotransferase</keyword>
<keyword id="KW-0436">Ligase</keyword>
<keyword id="KW-0547">Nucleotide-binding</keyword>
<keyword id="KW-0539">Nucleus</keyword>
<keyword id="KW-0597">Phosphoprotein</keyword>
<keyword id="KW-1185">Reference proteome</keyword>
<sequence length="557" mass="63241">MCGILAVHHVAEDIEAFKPKALHLSKQLRHRGPDWSGKAIRNQTILCHERLAIVGVESGAQPLVSDDGKLVLTVNGEIYNHLKLRENLKGNYKFKTYSDCEVILYLYREHGPACANMLDGMFSWVLYDQDKDKVVAARDPIGITTLYQGFSSDSPDTAYFASELKALHPVCDKIIAFPPGHYYDSETKQTVRYFKPSWWDENKIPSNPVDYKLLRETLEASVRKRLMAEVPYGVLLSGGLDSSLIASIAARETEKLANSTSQSEEARTITAWPKLHSFAIGLPGSPDLLAARKVADFLHTFHHEHTFTIDEGLDALRDVIYHLETYDVTTIRASTPMYLLSRKIKAQGVKMVLSGEGSDEIFGGYLYFGNAPSREAFHSECVRRVKNLHLSDCLRANKSTMAWGLEARVPFLDKDFLEVALNIDPEEKMYINGRKEKYILRKAFDTTHDSSLQPYLPQDILWRQKEQFSDGVGYSWIDALKDTAELCISDDEFALPRREWGDDIPTTKEAFWYRKLFDEIFPRQCADTVMRWVPKAEWGCPEDPSGRYQAGHVAALK</sequence>
<comment type="catalytic activity">
    <reaction>
        <text>L-aspartate + L-glutamine + ATP + H2O = L-asparagine + L-glutamate + AMP + diphosphate + H(+)</text>
        <dbReference type="Rhea" id="RHEA:12228"/>
        <dbReference type="ChEBI" id="CHEBI:15377"/>
        <dbReference type="ChEBI" id="CHEBI:15378"/>
        <dbReference type="ChEBI" id="CHEBI:29985"/>
        <dbReference type="ChEBI" id="CHEBI:29991"/>
        <dbReference type="ChEBI" id="CHEBI:30616"/>
        <dbReference type="ChEBI" id="CHEBI:33019"/>
        <dbReference type="ChEBI" id="CHEBI:58048"/>
        <dbReference type="ChEBI" id="CHEBI:58359"/>
        <dbReference type="ChEBI" id="CHEBI:456215"/>
        <dbReference type="EC" id="6.3.5.4"/>
    </reaction>
</comment>
<comment type="pathway">
    <text>Amino-acid biosynthesis; L-asparagine biosynthesis; L-asparagine from L-aspartate (L-Gln route): step 1/1.</text>
</comment>
<comment type="subcellular location">
    <subcellularLocation>
        <location evidence="3">Cytoplasm</location>
    </subcellularLocation>
    <subcellularLocation>
        <location evidence="3">Nucleus</location>
    </subcellularLocation>
</comment>
<comment type="disruption phenotype">
    <text evidence="4">Causes asparagine auxotrophy.</text>
</comment>
<comment type="sequence caution" evidence="6">
    <conflict type="frameshift">
        <sequence resource="EMBL-CDS" id="BAA13764"/>
    </conflict>
</comment>
<name>ASNS_SCHPO</name>
<evidence type="ECO:0000250" key="1"/>
<evidence type="ECO:0000255" key="2">
    <source>
        <dbReference type="PROSITE-ProRule" id="PRU00609"/>
    </source>
</evidence>
<evidence type="ECO:0000269" key="3">
    <source>
    </source>
</evidence>
<evidence type="ECO:0000269" key="4">
    <source>
    </source>
</evidence>
<evidence type="ECO:0000269" key="5">
    <source>
    </source>
</evidence>
<evidence type="ECO:0000305" key="6"/>
<reference key="1">
    <citation type="journal article" date="1997" name="DNA Res.">
        <title>Identification of open reading frames in Schizosaccharomyces pombe cDNAs.</title>
        <authorList>
            <person name="Yoshioka S."/>
            <person name="Kato K."/>
            <person name="Nakai K."/>
            <person name="Okayama H."/>
            <person name="Nojima H."/>
        </authorList>
    </citation>
    <scope>NUCLEOTIDE SEQUENCE [LARGE SCALE MRNA]</scope>
    <source>
        <strain>PR745</strain>
    </source>
</reference>
<reference key="2">
    <citation type="journal article" date="2002" name="Nature">
        <title>The genome sequence of Schizosaccharomyces pombe.</title>
        <authorList>
            <person name="Wood V."/>
            <person name="Gwilliam R."/>
            <person name="Rajandream M.A."/>
            <person name="Lyne M.H."/>
            <person name="Lyne R."/>
            <person name="Stewart A."/>
            <person name="Sgouros J.G."/>
            <person name="Peat N."/>
            <person name="Hayles J."/>
            <person name="Baker S.G."/>
            <person name="Basham D."/>
            <person name="Bowman S."/>
            <person name="Brooks K."/>
            <person name="Brown D."/>
            <person name="Brown S."/>
            <person name="Chillingworth T."/>
            <person name="Churcher C.M."/>
            <person name="Collins M."/>
            <person name="Connor R."/>
            <person name="Cronin A."/>
            <person name="Davis P."/>
            <person name="Feltwell T."/>
            <person name="Fraser A."/>
            <person name="Gentles S."/>
            <person name="Goble A."/>
            <person name="Hamlin N."/>
            <person name="Harris D.E."/>
            <person name="Hidalgo J."/>
            <person name="Hodgson G."/>
            <person name="Holroyd S."/>
            <person name="Hornsby T."/>
            <person name="Howarth S."/>
            <person name="Huckle E.J."/>
            <person name="Hunt S."/>
            <person name="Jagels K."/>
            <person name="James K.D."/>
            <person name="Jones L."/>
            <person name="Jones M."/>
            <person name="Leather S."/>
            <person name="McDonald S."/>
            <person name="McLean J."/>
            <person name="Mooney P."/>
            <person name="Moule S."/>
            <person name="Mungall K.L."/>
            <person name="Murphy L.D."/>
            <person name="Niblett D."/>
            <person name="Odell C."/>
            <person name="Oliver K."/>
            <person name="O'Neil S."/>
            <person name="Pearson D."/>
            <person name="Quail M.A."/>
            <person name="Rabbinowitsch E."/>
            <person name="Rutherford K.M."/>
            <person name="Rutter S."/>
            <person name="Saunders D."/>
            <person name="Seeger K."/>
            <person name="Sharp S."/>
            <person name="Skelton J."/>
            <person name="Simmonds M.N."/>
            <person name="Squares R."/>
            <person name="Squares S."/>
            <person name="Stevens K."/>
            <person name="Taylor K."/>
            <person name="Taylor R.G."/>
            <person name="Tivey A."/>
            <person name="Walsh S.V."/>
            <person name="Warren T."/>
            <person name="Whitehead S."/>
            <person name="Woodward J.R."/>
            <person name="Volckaert G."/>
            <person name="Aert R."/>
            <person name="Robben J."/>
            <person name="Grymonprez B."/>
            <person name="Weltjens I."/>
            <person name="Vanstreels E."/>
            <person name="Rieger M."/>
            <person name="Schaefer M."/>
            <person name="Mueller-Auer S."/>
            <person name="Gabel C."/>
            <person name="Fuchs M."/>
            <person name="Duesterhoeft A."/>
            <person name="Fritzc C."/>
            <person name="Holzer E."/>
            <person name="Moestl D."/>
            <person name="Hilbert H."/>
            <person name="Borzym K."/>
            <person name="Langer I."/>
            <person name="Beck A."/>
            <person name="Lehrach H."/>
            <person name="Reinhardt R."/>
            <person name="Pohl T.M."/>
            <person name="Eger P."/>
            <person name="Zimmermann W."/>
            <person name="Wedler H."/>
            <person name="Wambutt R."/>
            <person name="Purnelle B."/>
            <person name="Goffeau A."/>
            <person name="Cadieu E."/>
            <person name="Dreano S."/>
            <person name="Gloux S."/>
            <person name="Lelaure V."/>
            <person name="Mottier S."/>
            <person name="Galibert F."/>
            <person name="Aves S.J."/>
            <person name="Xiang Z."/>
            <person name="Hunt C."/>
            <person name="Moore K."/>
            <person name="Hurst S.M."/>
            <person name="Lucas M."/>
            <person name="Rochet M."/>
            <person name="Gaillardin C."/>
            <person name="Tallada V.A."/>
            <person name="Garzon A."/>
            <person name="Thode G."/>
            <person name="Daga R.R."/>
            <person name="Cruzado L."/>
            <person name="Jimenez J."/>
            <person name="Sanchez M."/>
            <person name="del Rey F."/>
            <person name="Benito J."/>
            <person name="Dominguez A."/>
            <person name="Revuelta J.L."/>
            <person name="Moreno S."/>
            <person name="Armstrong J."/>
            <person name="Forsburg S.L."/>
            <person name="Cerutti L."/>
            <person name="Lowe T."/>
            <person name="McCombie W.R."/>
            <person name="Paulsen I."/>
            <person name="Potashkin J."/>
            <person name="Shpakovski G.V."/>
            <person name="Ussery D."/>
            <person name="Barrell B.G."/>
            <person name="Nurse P."/>
        </authorList>
    </citation>
    <scope>NUCLEOTIDE SEQUENCE [LARGE SCALE GENOMIC DNA]</scope>
    <source>
        <strain>972 / ATCC 24843</strain>
    </source>
</reference>
<reference key="3">
    <citation type="journal article" date="2006" name="Nat. Biotechnol.">
        <title>ORFeome cloning and global analysis of protein localization in the fission yeast Schizosaccharomyces pombe.</title>
        <authorList>
            <person name="Matsuyama A."/>
            <person name="Arai R."/>
            <person name="Yashiroda Y."/>
            <person name="Shirai A."/>
            <person name="Kamata A."/>
            <person name="Sekido S."/>
            <person name="Kobayashi Y."/>
            <person name="Hashimoto A."/>
            <person name="Hamamoto M."/>
            <person name="Hiraoka Y."/>
            <person name="Horinouchi S."/>
            <person name="Yoshida M."/>
        </authorList>
    </citation>
    <scope>SUBCELLULAR LOCATION [LARGE SCALE ANALYSIS]</scope>
</reference>
<reference key="4">
    <citation type="journal article" date="2007" name="Curr. Genet.">
        <title>Six new amino acid-auxotrophic markers for targeted gene integration and disruption in fission yeast.</title>
        <authorList>
            <person name="Ma Y."/>
            <person name="Sugiura R."/>
            <person name="Saito M."/>
            <person name="Koike A."/>
            <person name="Sio S.O."/>
            <person name="Fujita Y."/>
            <person name="Takegawa K."/>
            <person name="Kuno T."/>
        </authorList>
    </citation>
    <scope>DISRUPTION PHENOTYPE</scope>
</reference>
<reference key="5">
    <citation type="journal article" date="2008" name="J. Proteome Res.">
        <title>Phosphoproteome analysis of fission yeast.</title>
        <authorList>
            <person name="Wilson-Grady J.T."/>
            <person name="Villen J."/>
            <person name="Gygi S.P."/>
        </authorList>
    </citation>
    <scope>PHOSPHORYLATION [LARGE SCALE ANALYSIS] AT SER-391 AND SER-489</scope>
    <scope>IDENTIFICATION BY MASS SPECTROMETRY</scope>
</reference>
<accession>P78753</accession>
<accession>O42902</accession>
<protein>
    <recommendedName>
        <fullName>Probable asparagine synthetase [glutamine-hydrolyzing]</fullName>
        <ecNumber>6.3.5.4</ecNumber>
    </recommendedName>
    <alternativeName>
        <fullName>Glutamine-dependent asparagine synthetase</fullName>
    </alternativeName>
</protein>